<name>YRKD_BACSU</name>
<sequence length="63" mass="7030">MMEQGKDCREVVTQLAASRNAIDRAMGLIVSTNLEHCVRESLEKGEDTQNLVKEAVDLLVKSR</sequence>
<gene>
    <name type="primary">yrkD</name>
    <name type="ordered locus">BSU26550</name>
</gene>
<reference key="1">
    <citation type="journal article" date="1996" name="Microbiology">
        <title>Systematic sequencing of the 283 kb 210 degrees-232 degrees region of the Bacillus subtilis genome containing the skin element and many sporulation genes.</title>
        <authorList>
            <person name="Mizuno M."/>
            <person name="Masuda S."/>
            <person name="Takemaru K."/>
            <person name="Hosono S."/>
            <person name="Sato T."/>
            <person name="Takeuchi M."/>
            <person name="Kobayashi Y."/>
        </authorList>
    </citation>
    <scope>NUCLEOTIDE SEQUENCE [GENOMIC DNA]</scope>
    <source>
        <strain>168 / JH642</strain>
    </source>
</reference>
<reference key="2">
    <citation type="journal article" date="1997" name="Nature">
        <title>The complete genome sequence of the Gram-positive bacterium Bacillus subtilis.</title>
        <authorList>
            <person name="Kunst F."/>
            <person name="Ogasawara N."/>
            <person name="Moszer I."/>
            <person name="Albertini A.M."/>
            <person name="Alloni G."/>
            <person name="Azevedo V."/>
            <person name="Bertero M.G."/>
            <person name="Bessieres P."/>
            <person name="Bolotin A."/>
            <person name="Borchert S."/>
            <person name="Borriss R."/>
            <person name="Boursier L."/>
            <person name="Brans A."/>
            <person name="Braun M."/>
            <person name="Brignell S.C."/>
            <person name="Bron S."/>
            <person name="Brouillet S."/>
            <person name="Bruschi C.V."/>
            <person name="Caldwell B."/>
            <person name="Capuano V."/>
            <person name="Carter N.M."/>
            <person name="Choi S.-K."/>
            <person name="Codani J.-J."/>
            <person name="Connerton I.F."/>
            <person name="Cummings N.J."/>
            <person name="Daniel R.A."/>
            <person name="Denizot F."/>
            <person name="Devine K.M."/>
            <person name="Duesterhoeft A."/>
            <person name="Ehrlich S.D."/>
            <person name="Emmerson P.T."/>
            <person name="Entian K.-D."/>
            <person name="Errington J."/>
            <person name="Fabret C."/>
            <person name="Ferrari E."/>
            <person name="Foulger D."/>
            <person name="Fritz C."/>
            <person name="Fujita M."/>
            <person name="Fujita Y."/>
            <person name="Fuma S."/>
            <person name="Galizzi A."/>
            <person name="Galleron N."/>
            <person name="Ghim S.-Y."/>
            <person name="Glaser P."/>
            <person name="Goffeau A."/>
            <person name="Golightly E.J."/>
            <person name="Grandi G."/>
            <person name="Guiseppi G."/>
            <person name="Guy B.J."/>
            <person name="Haga K."/>
            <person name="Haiech J."/>
            <person name="Harwood C.R."/>
            <person name="Henaut A."/>
            <person name="Hilbert H."/>
            <person name="Holsappel S."/>
            <person name="Hosono S."/>
            <person name="Hullo M.-F."/>
            <person name="Itaya M."/>
            <person name="Jones L.-M."/>
            <person name="Joris B."/>
            <person name="Karamata D."/>
            <person name="Kasahara Y."/>
            <person name="Klaerr-Blanchard M."/>
            <person name="Klein C."/>
            <person name="Kobayashi Y."/>
            <person name="Koetter P."/>
            <person name="Koningstein G."/>
            <person name="Krogh S."/>
            <person name="Kumano M."/>
            <person name="Kurita K."/>
            <person name="Lapidus A."/>
            <person name="Lardinois S."/>
            <person name="Lauber J."/>
            <person name="Lazarevic V."/>
            <person name="Lee S.-M."/>
            <person name="Levine A."/>
            <person name="Liu H."/>
            <person name="Masuda S."/>
            <person name="Mauel C."/>
            <person name="Medigue C."/>
            <person name="Medina N."/>
            <person name="Mellado R.P."/>
            <person name="Mizuno M."/>
            <person name="Moestl D."/>
            <person name="Nakai S."/>
            <person name="Noback M."/>
            <person name="Noone D."/>
            <person name="O'Reilly M."/>
            <person name="Ogawa K."/>
            <person name="Ogiwara A."/>
            <person name="Oudega B."/>
            <person name="Park S.-H."/>
            <person name="Parro V."/>
            <person name="Pohl T.M."/>
            <person name="Portetelle D."/>
            <person name="Porwollik S."/>
            <person name="Prescott A.M."/>
            <person name="Presecan E."/>
            <person name="Pujic P."/>
            <person name="Purnelle B."/>
            <person name="Rapoport G."/>
            <person name="Rey M."/>
            <person name="Reynolds S."/>
            <person name="Rieger M."/>
            <person name="Rivolta C."/>
            <person name="Rocha E."/>
            <person name="Roche B."/>
            <person name="Rose M."/>
            <person name="Sadaie Y."/>
            <person name="Sato T."/>
            <person name="Scanlan E."/>
            <person name="Schleich S."/>
            <person name="Schroeter R."/>
            <person name="Scoffone F."/>
            <person name="Sekiguchi J."/>
            <person name="Sekowska A."/>
            <person name="Seror S.J."/>
            <person name="Serror P."/>
            <person name="Shin B.-S."/>
            <person name="Soldo B."/>
            <person name="Sorokin A."/>
            <person name="Tacconi E."/>
            <person name="Takagi T."/>
            <person name="Takahashi H."/>
            <person name="Takemaru K."/>
            <person name="Takeuchi M."/>
            <person name="Tamakoshi A."/>
            <person name="Tanaka T."/>
            <person name="Terpstra P."/>
            <person name="Tognoni A."/>
            <person name="Tosato V."/>
            <person name="Uchiyama S."/>
            <person name="Vandenbol M."/>
            <person name="Vannier F."/>
            <person name="Vassarotti A."/>
            <person name="Viari A."/>
            <person name="Wambutt R."/>
            <person name="Wedler E."/>
            <person name="Wedler H."/>
            <person name="Weitzenegger T."/>
            <person name="Winters P."/>
            <person name="Wipat A."/>
            <person name="Yamamoto H."/>
            <person name="Yamane K."/>
            <person name="Yasumoto K."/>
            <person name="Yata K."/>
            <person name="Yoshida K."/>
            <person name="Yoshikawa H.-F."/>
            <person name="Zumstein E."/>
            <person name="Yoshikawa H."/>
            <person name="Danchin A."/>
        </authorList>
    </citation>
    <scope>NUCLEOTIDE SEQUENCE [LARGE SCALE GENOMIC DNA]</scope>
    <source>
        <strain>168</strain>
    </source>
</reference>
<keyword id="KW-1185">Reference proteome</keyword>
<accession>P54431</accession>
<organism>
    <name type="scientific">Bacillus subtilis (strain 168)</name>
    <dbReference type="NCBI Taxonomy" id="224308"/>
    <lineage>
        <taxon>Bacteria</taxon>
        <taxon>Bacillati</taxon>
        <taxon>Bacillota</taxon>
        <taxon>Bacilli</taxon>
        <taxon>Bacillales</taxon>
        <taxon>Bacillaceae</taxon>
        <taxon>Bacillus</taxon>
    </lineage>
</organism>
<dbReference type="EMBL" id="D84432">
    <property type="protein sequence ID" value="BAA12359.1"/>
    <property type="molecule type" value="Genomic_DNA"/>
</dbReference>
<dbReference type="EMBL" id="AL009126">
    <property type="protein sequence ID" value="CAB14596.1"/>
    <property type="molecule type" value="Genomic_DNA"/>
</dbReference>
<dbReference type="PIR" id="B69976">
    <property type="entry name" value="B69976"/>
</dbReference>
<dbReference type="RefSeq" id="NP_390532.1">
    <property type="nucleotide sequence ID" value="NC_000964.3"/>
</dbReference>
<dbReference type="RefSeq" id="WP_010886577.1">
    <property type="nucleotide sequence ID" value="NC_000964.3"/>
</dbReference>
<dbReference type="SMR" id="P54431"/>
<dbReference type="FunCoup" id="P54431">
    <property type="interactions" value="8"/>
</dbReference>
<dbReference type="STRING" id="224308.BSU26550"/>
<dbReference type="PaxDb" id="224308-BSU26550"/>
<dbReference type="EnsemblBacteria" id="CAB14596">
    <property type="protein sequence ID" value="CAB14596"/>
    <property type="gene ID" value="BSU_26550"/>
</dbReference>
<dbReference type="GeneID" id="937650"/>
<dbReference type="KEGG" id="bsu:BSU26550"/>
<dbReference type="PATRIC" id="fig|224308.43.peg.2765"/>
<dbReference type="eggNOG" id="COG1937">
    <property type="taxonomic scope" value="Bacteria"/>
</dbReference>
<dbReference type="InParanoid" id="P54431"/>
<dbReference type="OrthoDB" id="9798732at2"/>
<dbReference type="PhylomeDB" id="P54431"/>
<dbReference type="BioCyc" id="BSUB:BSU26550-MONOMER"/>
<dbReference type="Proteomes" id="UP000001570">
    <property type="component" value="Chromosome"/>
</dbReference>
<dbReference type="GO" id="GO:0032993">
    <property type="term" value="C:protein-DNA complex"/>
    <property type="evidence" value="ECO:0000318"/>
    <property type="project" value="GO_Central"/>
</dbReference>
<dbReference type="GO" id="GO:0001217">
    <property type="term" value="F:DNA-binding transcription repressor activity"/>
    <property type="evidence" value="ECO:0000318"/>
    <property type="project" value="GO_Central"/>
</dbReference>
<dbReference type="GO" id="GO:0046872">
    <property type="term" value="F:metal ion binding"/>
    <property type="evidence" value="ECO:0007669"/>
    <property type="project" value="InterPro"/>
</dbReference>
<dbReference type="GO" id="GO:0000976">
    <property type="term" value="F:transcription cis-regulatory region binding"/>
    <property type="evidence" value="ECO:0000318"/>
    <property type="project" value="GO_Central"/>
</dbReference>
<dbReference type="GO" id="GO:0045892">
    <property type="term" value="P:negative regulation of DNA-templated transcription"/>
    <property type="evidence" value="ECO:0000318"/>
    <property type="project" value="GO_Central"/>
</dbReference>
<dbReference type="Gene3D" id="1.20.58.1000">
    <property type="entry name" value="Metal-sensitive repressor, helix protomer"/>
    <property type="match status" value="1"/>
</dbReference>
<dbReference type="InterPro" id="IPR003735">
    <property type="entry name" value="Metal_Tscrpt_repr"/>
</dbReference>
<dbReference type="InterPro" id="IPR038390">
    <property type="entry name" value="Metal_Tscrpt_repr_sf"/>
</dbReference>
<dbReference type="PANTHER" id="PTHR33677:SF5">
    <property type="entry name" value="TRANSCRIPTIONAL REPRESSOR FRMR"/>
    <property type="match status" value="1"/>
</dbReference>
<dbReference type="PANTHER" id="PTHR33677">
    <property type="entry name" value="TRANSCRIPTIONAL REPRESSOR FRMR-RELATED"/>
    <property type="match status" value="1"/>
</dbReference>
<dbReference type="Pfam" id="PF02583">
    <property type="entry name" value="Trns_repr_metal"/>
    <property type="match status" value="1"/>
</dbReference>
<proteinExistence type="predicted"/>
<feature type="chain" id="PRO_0000049870" description="Uncharacterized protein YrkD">
    <location>
        <begin position="1"/>
        <end position="63"/>
    </location>
</feature>
<protein>
    <recommendedName>
        <fullName>Uncharacterized protein YrkD</fullName>
    </recommendedName>
</protein>